<organism>
    <name type="scientific">Cytophaga hutchinsonii (strain ATCC 33406 / DSM 1761 / CIP 103989 / NBRC 15051 / NCIMB 9469 / D465)</name>
    <dbReference type="NCBI Taxonomy" id="269798"/>
    <lineage>
        <taxon>Bacteria</taxon>
        <taxon>Pseudomonadati</taxon>
        <taxon>Bacteroidota</taxon>
        <taxon>Cytophagia</taxon>
        <taxon>Cytophagales</taxon>
        <taxon>Cytophagaceae</taxon>
        <taxon>Cytophaga</taxon>
    </lineage>
</organism>
<comment type="function">
    <text evidence="1">Involved in mRNA degradation. Catalyzes the phosphorolysis of single-stranded polyribonucleotides processively in the 3'- to 5'-direction.</text>
</comment>
<comment type="catalytic activity">
    <reaction evidence="1">
        <text>RNA(n+1) + phosphate = RNA(n) + a ribonucleoside 5'-diphosphate</text>
        <dbReference type="Rhea" id="RHEA:22096"/>
        <dbReference type="Rhea" id="RHEA-COMP:14527"/>
        <dbReference type="Rhea" id="RHEA-COMP:17342"/>
        <dbReference type="ChEBI" id="CHEBI:43474"/>
        <dbReference type="ChEBI" id="CHEBI:57930"/>
        <dbReference type="ChEBI" id="CHEBI:140395"/>
        <dbReference type="EC" id="2.7.7.8"/>
    </reaction>
</comment>
<comment type="cofactor">
    <cofactor evidence="1">
        <name>Mg(2+)</name>
        <dbReference type="ChEBI" id="CHEBI:18420"/>
    </cofactor>
</comment>
<comment type="subcellular location">
    <subcellularLocation>
        <location evidence="1">Cytoplasm</location>
    </subcellularLocation>
</comment>
<comment type="similarity">
    <text evidence="1">Belongs to the polyribonucleotide nucleotidyltransferase family.</text>
</comment>
<gene>
    <name evidence="1" type="primary">pnp</name>
    <name type="ordered locus">CHU_1786</name>
</gene>
<protein>
    <recommendedName>
        <fullName evidence="1">Polyribonucleotide nucleotidyltransferase</fullName>
        <ecNumber evidence="1">2.7.7.8</ecNumber>
    </recommendedName>
    <alternativeName>
        <fullName evidence="1">Polynucleotide phosphorylase</fullName>
        <shortName evidence="1">PNPase</shortName>
    </alternativeName>
</protein>
<reference key="1">
    <citation type="journal article" date="2007" name="Appl. Environ. Microbiol.">
        <title>Genome sequence of the cellulolytic gliding bacterium Cytophaga hutchinsonii.</title>
        <authorList>
            <person name="Xie G."/>
            <person name="Bruce D.C."/>
            <person name="Challacombe J.F."/>
            <person name="Chertkov O."/>
            <person name="Detter J.C."/>
            <person name="Gilna P."/>
            <person name="Han C.S."/>
            <person name="Lucas S."/>
            <person name="Misra M."/>
            <person name="Myers G.L."/>
            <person name="Richardson P."/>
            <person name="Tapia R."/>
            <person name="Thayer N."/>
            <person name="Thompson L.S."/>
            <person name="Brettin T.S."/>
            <person name="Henrissat B."/>
            <person name="Wilson D.B."/>
            <person name="McBride M.J."/>
        </authorList>
    </citation>
    <scope>NUCLEOTIDE SEQUENCE [LARGE SCALE GENOMIC DNA]</scope>
    <source>
        <strain>ATCC 33406 / DSM 1761 / JCM 20678 / CIP 103989 / IAM 12607 / NBRC 15051 / NCIMB 9469 / D465</strain>
    </source>
</reference>
<keyword id="KW-0963">Cytoplasm</keyword>
<keyword id="KW-0460">Magnesium</keyword>
<keyword id="KW-0479">Metal-binding</keyword>
<keyword id="KW-0548">Nucleotidyltransferase</keyword>
<keyword id="KW-1185">Reference proteome</keyword>
<keyword id="KW-0694">RNA-binding</keyword>
<keyword id="KW-0808">Transferase</keyword>
<sequence length="717" mass="78480">MSYPGLTIINKTITLPDGREIQIETGKLAKQADGSAVVKLGNAMILATVVSAKEAKPGVDFMPLSVDYQEKFASNGKIPGGFLKRESRLSDYEILISRLVDRAMRPLFPEDFHADTQVAITLISADADVLPDALACLAAQAAMSVSDIPFNGPVSEVRVISLNGEFIINPKPAQIEKAELELIVAASYDNVIMVEGEMSEVSEELMLNAIKVAHDAIRTQCIVLKELESAAGKTEKRTYSHEVNDWDLKKKINDAVYQQVYEVAKLGNANKNTRAEGFKAVKKAYIESLPADHTEDLTLIGKYYHDVEKDAVRNLILDERKRLDGRSLEQIRPIWSEVGYLPSAHGSAIFTRGETQSLTTVTFGTRLDEQMIDSAMFSGNNKLMLHYNFPGFSTGEVKPNRGPGRREVGHGNLAYRAIKKVMPPEIENPYTIRIVSDILESNGSSSMATVCAGTLALMDAGIKIKAPVSGIAMGLITDTKTGRWAVLSDILGDEDHLGDMDFKVTGTEKGITACQMDIKVDGLSYDILSQALQQANRGRLHILSEMKKTLATPREDLKPHAPRMIMIQIPKELIGAVIGPGGKIIQEIQKTSGATVNIEEKDNAGWVSIFSKDKTALDSALSQIKGIVTLPEVGEVYEGKVKSITAFGAFVEFLPGKDGLLHISEIKWERLDTMEGVLEVGETVKVKLVEVDKKTGKYRLSRKVLIPKPEQQATSNS</sequence>
<accession>Q11U61</accession>
<name>PNP_CYTH3</name>
<evidence type="ECO:0000255" key="1">
    <source>
        <dbReference type="HAMAP-Rule" id="MF_01595"/>
    </source>
</evidence>
<feature type="chain" id="PRO_0000329615" description="Polyribonucleotide nucleotidyltransferase">
    <location>
        <begin position="1"/>
        <end position="717"/>
    </location>
</feature>
<feature type="domain" description="KH" evidence="1">
    <location>
        <begin position="562"/>
        <end position="624"/>
    </location>
</feature>
<feature type="domain" description="S1 motif" evidence="1">
    <location>
        <begin position="634"/>
        <end position="703"/>
    </location>
</feature>
<feature type="binding site" evidence="1">
    <location>
        <position position="495"/>
    </location>
    <ligand>
        <name>Mg(2+)</name>
        <dbReference type="ChEBI" id="CHEBI:18420"/>
    </ligand>
</feature>
<feature type="binding site" evidence="1">
    <location>
        <position position="501"/>
    </location>
    <ligand>
        <name>Mg(2+)</name>
        <dbReference type="ChEBI" id="CHEBI:18420"/>
    </ligand>
</feature>
<dbReference type="EC" id="2.7.7.8" evidence="1"/>
<dbReference type="EMBL" id="CP000383">
    <property type="protein sequence ID" value="ABG59053.1"/>
    <property type="molecule type" value="Genomic_DNA"/>
</dbReference>
<dbReference type="RefSeq" id="WP_011585170.1">
    <property type="nucleotide sequence ID" value="NC_008255.1"/>
</dbReference>
<dbReference type="SMR" id="Q11U61"/>
<dbReference type="STRING" id="269798.CHU_1786"/>
<dbReference type="KEGG" id="chu:CHU_1786"/>
<dbReference type="eggNOG" id="COG1185">
    <property type="taxonomic scope" value="Bacteria"/>
</dbReference>
<dbReference type="HOGENOM" id="CLU_004217_2_2_10"/>
<dbReference type="OrthoDB" id="9804305at2"/>
<dbReference type="Proteomes" id="UP000001822">
    <property type="component" value="Chromosome"/>
</dbReference>
<dbReference type="GO" id="GO:0005829">
    <property type="term" value="C:cytosol"/>
    <property type="evidence" value="ECO:0007669"/>
    <property type="project" value="TreeGrafter"/>
</dbReference>
<dbReference type="GO" id="GO:0000175">
    <property type="term" value="F:3'-5'-RNA exonuclease activity"/>
    <property type="evidence" value="ECO:0007669"/>
    <property type="project" value="TreeGrafter"/>
</dbReference>
<dbReference type="GO" id="GO:0000287">
    <property type="term" value="F:magnesium ion binding"/>
    <property type="evidence" value="ECO:0007669"/>
    <property type="project" value="UniProtKB-UniRule"/>
</dbReference>
<dbReference type="GO" id="GO:0004654">
    <property type="term" value="F:polyribonucleotide nucleotidyltransferase activity"/>
    <property type="evidence" value="ECO:0007669"/>
    <property type="project" value="UniProtKB-UniRule"/>
</dbReference>
<dbReference type="GO" id="GO:0003723">
    <property type="term" value="F:RNA binding"/>
    <property type="evidence" value="ECO:0007669"/>
    <property type="project" value="UniProtKB-UniRule"/>
</dbReference>
<dbReference type="GO" id="GO:0006402">
    <property type="term" value="P:mRNA catabolic process"/>
    <property type="evidence" value="ECO:0007669"/>
    <property type="project" value="UniProtKB-UniRule"/>
</dbReference>
<dbReference type="GO" id="GO:0006396">
    <property type="term" value="P:RNA processing"/>
    <property type="evidence" value="ECO:0007669"/>
    <property type="project" value="InterPro"/>
</dbReference>
<dbReference type="CDD" id="cd02393">
    <property type="entry name" value="KH-I_PNPase"/>
    <property type="match status" value="1"/>
</dbReference>
<dbReference type="CDD" id="cd11364">
    <property type="entry name" value="RNase_PH_PNPase_2"/>
    <property type="match status" value="1"/>
</dbReference>
<dbReference type="CDD" id="cd04472">
    <property type="entry name" value="S1_PNPase"/>
    <property type="match status" value="1"/>
</dbReference>
<dbReference type="FunFam" id="3.30.1370.10:FF:000001">
    <property type="entry name" value="Polyribonucleotide nucleotidyltransferase"/>
    <property type="match status" value="1"/>
</dbReference>
<dbReference type="FunFam" id="3.30.230.70:FF:000001">
    <property type="entry name" value="Polyribonucleotide nucleotidyltransferase"/>
    <property type="match status" value="1"/>
</dbReference>
<dbReference type="FunFam" id="3.30.230.70:FF:000002">
    <property type="entry name" value="Polyribonucleotide nucleotidyltransferase"/>
    <property type="match status" value="1"/>
</dbReference>
<dbReference type="FunFam" id="2.40.50.140:FF:000189">
    <property type="entry name" value="Polyribonucleotide nucleotidyltransferase, putative"/>
    <property type="match status" value="1"/>
</dbReference>
<dbReference type="Gene3D" id="3.30.230.70">
    <property type="entry name" value="GHMP Kinase, N-terminal domain"/>
    <property type="match status" value="2"/>
</dbReference>
<dbReference type="Gene3D" id="3.30.1370.10">
    <property type="entry name" value="K Homology domain, type 1"/>
    <property type="match status" value="1"/>
</dbReference>
<dbReference type="Gene3D" id="2.40.50.140">
    <property type="entry name" value="Nucleic acid-binding proteins"/>
    <property type="match status" value="1"/>
</dbReference>
<dbReference type="HAMAP" id="MF_01595">
    <property type="entry name" value="PNPase"/>
    <property type="match status" value="1"/>
</dbReference>
<dbReference type="InterPro" id="IPR001247">
    <property type="entry name" value="ExoRNase_PH_dom1"/>
</dbReference>
<dbReference type="InterPro" id="IPR015847">
    <property type="entry name" value="ExoRNase_PH_dom2"/>
</dbReference>
<dbReference type="InterPro" id="IPR036345">
    <property type="entry name" value="ExoRNase_PH_dom2_sf"/>
</dbReference>
<dbReference type="InterPro" id="IPR004087">
    <property type="entry name" value="KH_dom"/>
</dbReference>
<dbReference type="InterPro" id="IPR004088">
    <property type="entry name" value="KH_dom_type_1"/>
</dbReference>
<dbReference type="InterPro" id="IPR036612">
    <property type="entry name" value="KH_dom_type_1_sf"/>
</dbReference>
<dbReference type="InterPro" id="IPR012340">
    <property type="entry name" value="NA-bd_OB-fold"/>
</dbReference>
<dbReference type="InterPro" id="IPR012162">
    <property type="entry name" value="PNPase"/>
</dbReference>
<dbReference type="InterPro" id="IPR027408">
    <property type="entry name" value="PNPase/RNase_PH_dom_sf"/>
</dbReference>
<dbReference type="InterPro" id="IPR015848">
    <property type="entry name" value="PNPase_PH_RNA-bd_bac/org-type"/>
</dbReference>
<dbReference type="InterPro" id="IPR020568">
    <property type="entry name" value="Ribosomal_Su5_D2-typ_SF"/>
</dbReference>
<dbReference type="InterPro" id="IPR003029">
    <property type="entry name" value="S1_domain"/>
</dbReference>
<dbReference type="NCBIfam" id="TIGR03591">
    <property type="entry name" value="polynuc_phos"/>
    <property type="match status" value="1"/>
</dbReference>
<dbReference type="NCBIfam" id="NF008805">
    <property type="entry name" value="PRK11824.1"/>
    <property type="match status" value="1"/>
</dbReference>
<dbReference type="PANTHER" id="PTHR11252">
    <property type="entry name" value="POLYRIBONUCLEOTIDE NUCLEOTIDYLTRANSFERASE"/>
    <property type="match status" value="1"/>
</dbReference>
<dbReference type="PANTHER" id="PTHR11252:SF0">
    <property type="entry name" value="POLYRIBONUCLEOTIDE NUCLEOTIDYLTRANSFERASE 1, MITOCHONDRIAL"/>
    <property type="match status" value="1"/>
</dbReference>
<dbReference type="Pfam" id="PF00013">
    <property type="entry name" value="KH_1"/>
    <property type="match status" value="1"/>
</dbReference>
<dbReference type="Pfam" id="PF03726">
    <property type="entry name" value="PNPase"/>
    <property type="match status" value="1"/>
</dbReference>
<dbReference type="Pfam" id="PF01138">
    <property type="entry name" value="RNase_PH"/>
    <property type="match status" value="2"/>
</dbReference>
<dbReference type="Pfam" id="PF03725">
    <property type="entry name" value="RNase_PH_C"/>
    <property type="match status" value="2"/>
</dbReference>
<dbReference type="Pfam" id="PF00575">
    <property type="entry name" value="S1"/>
    <property type="match status" value="1"/>
</dbReference>
<dbReference type="PIRSF" id="PIRSF005499">
    <property type="entry name" value="PNPase"/>
    <property type="match status" value="1"/>
</dbReference>
<dbReference type="SMART" id="SM00322">
    <property type="entry name" value="KH"/>
    <property type="match status" value="1"/>
</dbReference>
<dbReference type="SMART" id="SM00316">
    <property type="entry name" value="S1"/>
    <property type="match status" value="1"/>
</dbReference>
<dbReference type="SUPFAM" id="SSF54791">
    <property type="entry name" value="Eukaryotic type KH-domain (KH-domain type I)"/>
    <property type="match status" value="1"/>
</dbReference>
<dbReference type="SUPFAM" id="SSF50249">
    <property type="entry name" value="Nucleic acid-binding proteins"/>
    <property type="match status" value="1"/>
</dbReference>
<dbReference type="SUPFAM" id="SSF55666">
    <property type="entry name" value="Ribonuclease PH domain 2-like"/>
    <property type="match status" value="2"/>
</dbReference>
<dbReference type="SUPFAM" id="SSF54211">
    <property type="entry name" value="Ribosomal protein S5 domain 2-like"/>
    <property type="match status" value="2"/>
</dbReference>
<dbReference type="PROSITE" id="PS50084">
    <property type="entry name" value="KH_TYPE_1"/>
    <property type="match status" value="1"/>
</dbReference>
<dbReference type="PROSITE" id="PS50126">
    <property type="entry name" value="S1"/>
    <property type="match status" value="1"/>
</dbReference>
<proteinExistence type="inferred from homology"/>